<accession>F4JMB8</accession>
<accession>Q1G3J1</accession>
<comment type="function">
    <text evidence="1">Heavy-metal-binding protein.</text>
</comment>
<comment type="similarity">
    <text evidence="6">Belongs to the HIPP family.</text>
</comment>
<evidence type="ECO:0000250" key="1">
    <source>
        <dbReference type="UniProtKB" id="Q9LZF1"/>
    </source>
</evidence>
<evidence type="ECO:0000250" key="2">
    <source>
        <dbReference type="UniProtKB" id="Q9SZN7"/>
    </source>
</evidence>
<evidence type="ECO:0000255" key="3">
    <source>
        <dbReference type="PROSITE-ProRule" id="PRU00280"/>
    </source>
</evidence>
<evidence type="ECO:0000303" key="4">
    <source>
    </source>
</evidence>
<evidence type="ECO:0000303" key="5">
    <source>
    </source>
</evidence>
<evidence type="ECO:0000305" key="6"/>
<evidence type="ECO:0000312" key="7">
    <source>
        <dbReference type="Araport" id="AT4G10465"/>
    </source>
</evidence>
<evidence type="ECO:0000312" key="8">
    <source>
        <dbReference type="EMBL" id="AL049524"/>
    </source>
</evidence>
<evidence type="ECO:0000312" key="9">
    <source>
        <dbReference type="Proteomes" id="UP000006548"/>
    </source>
</evidence>
<protein>
    <recommendedName>
        <fullName evidence="4 5">Heavy metal-associated isoprenylated plant protein 44</fullName>
        <shortName evidence="4 5">AtHIP44</shortName>
    </recommendedName>
</protein>
<feature type="chain" id="PRO_0000437861" description="Heavy metal-associated isoprenylated plant protein 44">
    <location>
        <begin position="1"/>
        <end position="180"/>
    </location>
</feature>
<feature type="propeptide" id="PRO_0000437862" description="Removed in mature form" evidence="6">
    <location>
        <begin position="181"/>
        <end position="183"/>
    </location>
</feature>
<feature type="domain" description="HMA" evidence="3">
    <location>
        <begin position="50"/>
        <end position="113"/>
    </location>
</feature>
<feature type="binding site" evidence="3">
    <location>
        <position position="61"/>
    </location>
    <ligand>
        <name>a metal cation</name>
        <dbReference type="ChEBI" id="CHEBI:25213"/>
    </ligand>
</feature>
<feature type="binding site" evidence="3">
    <location>
        <position position="64"/>
    </location>
    <ligand>
        <name>a metal cation</name>
        <dbReference type="ChEBI" id="CHEBI:25213"/>
    </ligand>
</feature>
<feature type="modified residue" description="Cysteine methyl ester" evidence="2">
    <location>
        <position position="180"/>
    </location>
</feature>
<feature type="lipid moiety-binding region" description="S-farnesyl cysteine" evidence="2">
    <location>
        <position position="180"/>
    </location>
</feature>
<feature type="sequence conflict" description="In Ref. 3; ABF59244." evidence="6" ref="3">
    <original>V</original>
    <variation>L</variation>
    <location>
        <position position="65"/>
    </location>
</feature>
<dbReference type="EMBL" id="AL049524">
    <property type="status" value="NOT_ANNOTATED_CDS"/>
    <property type="molecule type" value="Genomic_DNA"/>
</dbReference>
<dbReference type="EMBL" id="CP002687">
    <property type="protein sequence ID" value="AEE82886.1"/>
    <property type="molecule type" value="Genomic_DNA"/>
</dbReference>
<dbReference type="EMBL" id="DQ487593">
    <property type="protein sequence ID" value="ABF59244.1"/>
    <property type="molecule type" value="mRNA"/>
</dbReference>
<dbReference type="RefSeq" id="NP_001078368.1">
    <property type="nucleotide sequence ID" value="NM_001084899.2"/>
</dbReference>
<dbReference type="SMR" id="F4JMB8"/>
<dbReference type="FunCoup" id="F4JMB8">
    <property type="interactions" value="43"/>
</dbReference>
<dbReference type="STRING" id="3702.F4JMB8"/>
<dbReference type="PaxDb" id="3702-AT4G10465.1"/>
<dbReference type="ProteomicsDB" id="230135"/>
<dbReference type="EnsemblPlants" id="AT4G10465.1">
    <property type="protein sequence ID" value="AT4G10465.1"/>
    <property type="gene ID" value="AT4G10465"/>
</dbReference>
<dbReference type="GeneID" id="5008132"/>
<dbReference type="Gramene" id="AT4G10465.1">
    <property type="protein sequence ID" value="AT4G10465.1"/>
    <property type="gene ID" value="AT4G10465"/>
</dbReference>
<dbReference type="KEGG" id="ath:AT4G10465"/>
<dbReference type="Araport" id="AT4G10465"/>
<dbReference type="TAIR" id="AT4G10465">
    <property type="gene designation" value="HIPP44"/>
</dbReference>
<dbReference type="eggNOG" id="KOG1603">
    <property type="taxonomic scope" value="Eukaryota"/>
</dbReference>
<dbReference type="HOGENOM" id="CLU_100095_0_0_1"/>
<dbReference type="InParanoid" id="F4JMB8"/>
<dbReference type="OMA" id="ENAHACH"/>
<dbReference type="PRO" id="PR:F4JMB8"/>
<dbReference type="Proteomes" id="UP000006548">
    <property type="component" value="Chromosome 4"/>
</dbReference>
<dbReference type="ExpressionAtlas" id="F4JMB8">
    <property type="expression patterns" value="baseline"/>
</dbReference>
<dbReference type="GO" id="GO:0046872">
    <property type="term" value="F:metal ion binding"/>
    <property type="evidence" value="ECO:0007669"/>
    <property type="project" value="UniProtKB-KW"/>
</dbReference>
<dbReference type="CDD" id="cd00371">
    <property type="entry name" value="HMA"/>
    <property type="match status" value="1"/>
</dbReference>
<dbReference type="Gene3D" id="3.30.70.100">
    <property type="match status" value="1"/>
</dbReference>
<dbReference type="InterPro" id="IPR006121">
    <property type="entry name" value="HMA_dom"/>
</dbReference>
<dbReference type="InterPro" id="IPR036163">
    <property type="entry name" value="HMA_dom_sf"/>
</dbReference>
<dbReference type="PANTHER" id="PTHR22814">
    <property type="entry name" value="COPPER TRANSPORT PROTEIN ATOX1-RELATED"/>
    <property type="match status" value="1"/>
</dbReference>
<dbReference type="PANTHER" id="PTHR22814:SF354">
    <property type="entry name" value="HEAVY METAL-ASSOCIATED ISOPRENYLATED PLANT PROTEIN 44"/>
    <property type="match status" value="1"/>
</dbReference>
<dbReference type="Pfam" id="PF00403">
    <property type="entry name" value="HMA"/>
    <property type="match status" value="1"/>
</dbReference>
<dbReference type="SUPFAM" id="SSF55008">
    <property type="entry name" value="HMA, heavy metal-associated domain"/>
    <property type="match status" value="1"/>
</dbReference>
<dbReference type="PROSITE" id="PS50846">
    <property type="entry name" value="HMA_2"/>
    <property type="match status" value="1"/>
</dbReference>
<gene>
    <name evidence="4 5" type="primary">HIPP44</name>
    <name evidence="7" type="ordered locus">At4g10465</name>
    <name evidence="8" type="ORF">F7L13</name>
</gene>
<keyword id="KW-0449">Lipoprotein</keyword>
<keyword id="KW-0479">Metal-binding</keyword>
<keyword id="KW-0488">Methylation</keyword>
<keyword id="KW-0636">Prenylation</keyword>
<keyword id="KW-1185">Reference proteome</keyword>
<reference key="1">
    <citation type="journal article" date="1999" name="Nature">
        <title>Sequence and analysis of chromosome 4 of the plant Arabidopsis thaliana.</title>
        <authorList>
            <person name="Mayer K.F.X."/>
            <person name="Schueller C."/>
            <person name="Wambutt R."/>
            <person name="Murphy G."/>
            <person name="Volckaert G."/>
            <person name="Pohl T."/>
            <person name="Duesterhoeft A."/>
            <person name="Stiekema W."/>
            <person name="Entian K.-D."/>
            <person name="Terryn N."/>
            <person name="Harris B."/>
            <person name="Ansorge W."/>
            <person name="Brandt P."/>
            <person name="Grivell L.A."/>
            <person name="Rieger M."/>
            <person name="Weichselgartner M."/>
            <person name="de Simone V."/>
            <person name="Obermaier B."/>
            <person name="Mache R."/>
            <person name="Mueller M."/>
            <person name="Kreis M."/>
            <person name="Delseny M."/>
            <person name="Puigdomenech P."/>
            <person name="Watson M."/>
            <person name="Schmidtheini T."/>
            <person name="Reichert B."/>
            <person name="Portetelle D."/>
            <person name="Perez-Alonso M."/>
            <person name="Boutry M."/>
            <person name="Bancroft I."/>
            <person name="Vos P."/>
            <person name="Hoheisel J."/>
            <person name="Zimmermann W."/>
            <person name="Wedler H."/>
            <person name="Ridley P."/>
            <person name="Langham S.-A."/>
            <person name="McCullagh B."/>
            <person name="Bilham L."/>
            <person name="Robben J."/>
            <person name="van der Schueren J."/>
            <person name="Grymonprez B."/>
            <person name="Chuang Y.-J."/>
            <person name="Vandenbussche F."/>
            <person name="Braeken M."/>
            <person name="Weltjens I."/>
            <person name="Voet M."/>
            <person name="Bastiaens I."/>
            <person name="Aert R."/>
            <person name="Defoor E."/>
            <person name="Weitzenegger T."/>
            <person name="Bothe G."/>
            <person name="Ramsperger U."/>
            <person name="Hilbert H."/>
            <person name="Braun M."/>
            <person name="Holzer E."/>
            <person name="Brandt A."/>
            <person name="Peters S."/>
            <person name="van Staveren M."/>
            <person name="Dirkse W."/>
            <person name="Mooijman P."/>
            <person name="Klein Lankhorst R."/>
            <person name="Rose M."/>
            <person name="Hauf J."/>
            <person name="Koetter P."/>
            <person name="Berneiser S."/>
            <person name="Hempel S."/>
            <person name="Feldpausch M."/>
            <person name="Lamberth S."/>
            <person name="Van den Daele H."/>
            <person name="De Keyser A."/>
            <person name="Buysshaert C."/>
            <person name="Gielen J."/>
            <person name="Villarroel R."/>
            <person name="De Clercq R."/>
            <person name="van Montagu M."/>
            <person name="Rogers J."/>
            <person name="Cronin A."/>
            <person name="Quail M.A."/>
            <person name="Bray-Allen S."/>
            <person name="Clark L."/>
            <person name="Doggett J."/>
            <person name="Hall S."/>
            <person name="Kay M."/>
            <person name="Lennard N."/>
            <person name="McLay K."/>
            <person name="Mayes R."/>
            <person name="Pettett A."/>
            <person name="Rajandream M.A."/>
            <person name="Lyne M."/>
            <person name="Benes V."/>
            <person name="Rechmann S."/>
            <person name="Borkova D."/>
            <person name="Bloecker H."/>
            <person name="Scharfe M."/>
            <person name="Grimm M."/>
            <person name="Loehnert T.-H."/>
            <person name="Dose S."/>
            <person name="de Haan M."/>
            <person name="Maarse A.C."/>
            <person name="Schaefer M."/>
            <person name="Mueller-Auer S."/>
            <person name="Gabel C."/>
            <person name="Fuchs M."/>
            <person name="Fartmann B."/>
            <person name="Granderath K."/>
            <person name="Dauner D."/>
            <person name="Herzl A."/>
            <person name="Neumann S."/>
            <person name="Argiriou A."/>
            <person name="Vitale D."/>
            <person name="Liguori R."/>
            <person name="Piravandi E."/>
            <person name="Massenet O."/>
            <person name="Quigley F."/>
            <person name="Clabauld G."/>
            <person name="Muendlein A."/>
            <person name="Felber R."/>
            <person name="Schnabl S."/>
            <person name="Hiller R."/>
            <person name="Schmidt W."/>
            <person name="Lecharny A."/>
            <person name="Aubourg S."/>
            <person name="Chefdor F."/>
            <person name="Cooke R."/>
            <person name="Berger C."/>
            <person name="Monfort A."/>
            <person name="Casacuberta E."/>
            <person name="Gibbons T."/>
            <person name="Weber N."/>
            <person name="Vandenbol M."/>
            <person name="Bargues M."/>
            <person name="Terol J."/>
            <person name="Torres A."/>
            <person name="Perez-Perez A."/>
            <person name="Purnelle B."/>
            <person name="Bent E."/>
            <person name="Johnson S."/>
            <person name="Tacon D."/>
            <person name="Jesse T."/>
            <person name="Heijnen L."/>
            <person name="Schwarz S."/>
            <person name="Scholler P."/>
            <person name="Heber S."/>
            <person name="Francs P."/>
            <person name="Bielke C."/>
            <person name="Frishman D."/>
            <person name="Haase D."/>
            <person name="Lemcke K."/>
            <person name="Mewes H.-W."/>
            <person name="Stocker S."/>
            <person name="Zaccaria P."/>
            <person name="Bevan M."/>
            <person name="Wilson R.K."/>
            <person name="de la Bastide M."/>
            <person name="Habermann K."/>
            <person name="Parnell L."/>
            <person name="Dedhia N."/>
            <person name="Gnoj L."/>
            <person name="Schutz K."/>
            <person name="Huang E."/>
            <person name="Spiegel L."/>
            <person name="Sekhon M."/>
            <person name="Murray J."/>
            <person name="Sheet P."/>
            <person name="Cordes M."/>
            <person name="Abu-Threideh J."/>
            <person name="Stoneking T."/>
            <person name="Kalicki J."/>
            <person name="Graves T."/>
            <person name="Harmon G."/>
            <person name="Edwards J."/>
            <person name="Latreille P."/>
            <person name="Courtney L."/>
            <person name="Cloud J."/>
            <person name="Abbott A."/>
            <person name="Scott K."/>
            <person name="Johnson D."/>
            <person name="Minx P."/>
            <person name="Bentley D."/>
            <person name="Fulton B."/>
            <person name="Miller N."/>
            <person name="Greco T."/>
            <person name="Kemp K."/>
            <person name="Kramer J."/>
            <person name="Fulton L."/>
            <person name="Mardis E."/>
            <person name="Dante M."/>
            <person name="Pepin K."/>
            <person name="Hillier L.W."/>
            <person name="Nelson J."/>
            <person name="Spieth J."/>
            <person name="Ryan E."/>
            <person name="Andrews S."/>
            <person name="Geisel C."/>
            <person name="Layman D."/>
            <person name="Du H."/>
            <person name="Ali J."/>
            <person name="Berghoff A."/>
            <person name="Jones K."/>
            <person name="Drone K."/>
            <person name="Cotton M."/>
            <person name="Joshu C."/>
            <person name="Antonoiu B."/>
            <person name="Zidanic M."/>
            <person name="Strong C."/>
            <person name="Sun H."/>
            <person name="Lamar B."/>
            <person name="Yordan C."/>
            <person name="Ma P."/>
            <person name="Zhong J."/>
            <person name="Preston R."/>
            <person name="Vil D."/>
            <person name="Shekher M."/>
            <person name="Matero A."/>
            <person name="Shah R."/>
            <person name="Swaby I.K."/>
            <person name="O'Shaughnessy A."/>
            <person name="Rodriguez M."/>
            <person name="Hoffman J."/>
            <person name="Till S."/>
            <person name="Granat S."/>
            <person name="Shohdy N."/>
            <person name="Hasegawa A."/>
            <person name="Hameed A."/>
            <person name="Lodhi M."/>
            <person name="Johnson A."/>
            <person name="Chen E."/>
            <person name="Marra M.A."/>
            <person name="Martienssen R."/>
            <person name="McCombie W.R."/>
        </authorList>
    </citation>
    <scope>NUCLEOTIDE SEQUENCE [LARGE SCALE GENOMIC DNA]</scope>
    <source>
        <strain>cv. Columbia</strain>
    </source>
</reference>
<reference key="2">
    <citation type="journal article" date="2017" name="Plant J.">
        <title>Araport11: a complete reannotation of the Arabidopsis thaliana reference genome.</title>
        <authorList>
            <person name="Cheng C.Y."/>
            <person name="Krishnakumar V."/>
            <person name="Chan A.P."/>
            <person name="Thibaud-Nissen F."/>
            <person name="Schobel S."/>
            <person name="Town C.D."/>
        </authorList>
    </citation>
    <scope>GENOME REANNOTATION</scope>
    <source>
        <strain>cv. Columbia</strain>
    </source>
</reference>
<reference key="3">
    <citation type="journal article" date="2006" name="Plant Biotechnol. J.">
        <title>Simultaneous high-throughput recombinational cloning of open reading frames in closed and open configurations.</title>
        <authorList>
            <person name="Underwood B.A."/>
            <person name="Vanderhaeghen R."/>
            <person name="Whitford R."/>
            <person name="Town C.D."/>
            <person name="Hilson P."/>
        </authorList>
    </citation>
    <scope>NUCLEOTIDE SEQUENCE [LARGE SCALE MRNA]</scope>
    <source>
        <strain>cv. Columbia</strain>
    </source>
</reference>
<reference key="4">
    <citation type="journal article" date="2010" name="Metallomics">
        <title>Metallochaperone-like genes in Arabidopsis thaliana.</title>
        <authorList>
            <person name="Tehseen M."/>
            <person name="Cairns N."/>
            <person name="Sherson S."/>
            <person name="Cobbett C.S."/>
        </authorList>
    </citation>
    <scope>GENE FAMILY</scope>
    <scope>NOMENCLATURE</scope>
</reference>
<reference key="5">
    <citation type="journal article" date="2013" name="FEBS J.">
        <title>Heavy metal-associated isoprenylated plant protein (HIPP): characterization of a family of proteins exclusive to plants.</title>
        <authorList>
            <person name="de Abreu-Neto J.B."/>
            <person name="Turchetto-Zolet A.C."/>
            <person name="de Oliveira L.F."/>
            <person name="Zanettini M.H."/>
            <person name="Margis-Pinheiro M."/>
        </authorList>
    </citation>
    <scope>GENE FAMILY</scope>
    <scope>NOMENCLATURE</scope>
</reference>
<organism evidence="9">
    <name type="scientific">Arabidopsis thaliana</name>
    <name type="common">Mouse-ear cress</name>
    <dbReference type="NCBI Taxonomy" id="3702"/>
    <lineage>
        <taxon>Eukaryota</taxon>
        <taxon>Viridiplantae</taxon>
        <taxon>Streptophyta</taxon>
        <taxon>Embryophyta</taxon>
        <taxon>Tracheophyta</taxon>
        <taxon>Spermatophyta</taxon>
        <taxon>Magnoliopsida</taxon>
        <taxon>eudicotyledons</taxon>
        <taxon>Gunneridae</taxon>
        <taxon>Pentapetalae</taxon>
        <taxon>rosids</taxon>
        <taxon>malvids</taxon>
        <taxon>Brassicales</taxon>
        <taxon>Brassicaceae</taxon>
        <taxon>Camelineae</taxon>
        <taxon>Arabidopsis</taxon>
    </lineage>
</organism>
<sequence length="183" mass="21009">MSSLIVKSLGSIVSIIARIFFFRRSRPVSNPRTTAHISYFRMSRKRPLSLQTVELKVRMCCTGCVRIVRNAISKLRGVDSVEVDKELGRVRVVGYVDRNKVLKAVRRAGKRAEFSPYPEPPLYFTSTQNYFVDPSKEFKESYNYYRHGYNGTEQHGNIPVGSRGDDRVSNMFNDDNVNACRLM</sequence>
<proteinExistence type="evidence at transcript level"/>
<name>HIP44_ARATH</name>